<reference key="1">
    <citation type="journal article" date="2004" name="PLoS Biol.">
        <title>Genomic insights into methanotrophy: the complete genome sequence of Methylococcus capsulatus (Bath).</title>
        <authorList>
            <person name="Ward N.L."/>
            <person name="Larsen O."/>
            <person name="Sakwa J."/>
            <person name="Bruseth L."/>
            <person name="Khouri H.M."/>
            <person name="Durkin A.S."/>
            <person name="Dimitrov G."/>
            <person name="Jiang L."/>
            <person name="Scanlan D."/>
            <person name="Kang K.H."/>
            <person name="Lewis M.R."/>
            <person name="Nelson K.E."/>
            <person name="Methe B.A."/>
            <person name="Wu M."/>
            <person name="Heidelberg J.F."/>
            <person name="Paulsen I.T."/>
            <person name="Fouts D.E."/>
            <person name="Ravel J."/>
            <person name="Tettelin H."/>
            <person name="Ren Q."/>
            <person name="Read T.D."/>
            <person name="DeBoy R.T."/>
            <person name="Seshadri R."/>
            <person name="Salzberg S.L."/>
            <person name="Jensen H.B."/>
            <person name="Birkeland N.K."/>
            <person name="Nelson W.C."/>
            <person name="Dodson R.J."/>
            <person name="Grindhaug S.H."/>
            <person name="Holt I.E."/>
            <person name="Eidhammer I."/>
            <person name="Jonasen I."/>
            <person name="Vanaken S."/>
            <person name="Utterback T.R."/>
            <person name="Feldblyum T.V."/>
            <person name="Fraser C.M."/>
            <person name="Lillehaug J.R."/>
            <person name="Eisen J.A."/>
        </authorList>
    </citation>
    <scope>NUCLEOTIDE SEQUENCE [LARGE SCALE GENOMIC DNA]</scope>
    <source>
        <strain>ATCC 33009 / NCIMB 11132 / Bath</strain>
    </source>
</reference>
<proteinExistence type="inferred from homology"/>
<gene>
    <name evidence="1" type="primary">engB</name>
    <name type="ordered locus">MCA2604</name>
</gene>
<name>ENGB_METCA</name>
<accession>Q604E1</accession>
<sequence>MKIPPVSIRYLRSILELKDAPPDQGCEVAFAGRSNAGKSSAINTLANVGGLARVSKTPGRTRMINFFSIDDGRRLVDLPGYGYAKVPGEIHRRWEAALEQYLRYRQSLRGVFLLMDVRHPFTEMDEVMIEWCAHRSIALHVALTKSDKLSRGAAMNARLMAKTRLAGYGSPDFSVQLFSSLKKSGTEEAWEVLGRWLDLPREDQEKTPGA</sequence>
<keyword id="KW-0131">Cell cycle</keyword>
<keyword id="KW-0132">Cell division</keyword>
<keyword id="KW-0342">GTP-binding</keyword>
<keyword id="KW-0460">Magnesium</keyword>
<keyword id="KW-0479">Metal-binding</keyword>
<keyword id="KW-0547">Nucleotide-binding</keyword>
<keyword id="KW-1185">Reference proteome</keyword>
<keyword id="KW-0717">Septation</keyword>
<evidence type="ECO:0000255" key="1">
    <source>
        <dbReference type="HAMAP-Rule" id="MF_00321"/>
    </source>
</evidence>
<dbReference type="EMBL" id="AE017282">
    <property type="protein sequence ID" value="AAU91310.1"/>
    <property type="molecule type" value="Genomic_DNA"/>
</dbReference>
<dbReference type="SMR" id="Q604E1"/>
<dbReference type="STRING" id="243233.MCA2604"/>
<dbReference type="GeneID" id="88224787"/>
<dbReference type="KEGG" id="mca:MCA2604"/>
<dbReference type="eggNOG" id="COG0218">
    <property type="taxonomic scope" value="Bacteria"/>
</dbReference>
<dbReference type="HOGENOM" id="CLU_033732_3_0_6"/>
<dbReference type="Proteomes" id="UP000006821">
    <property type="component" value="Chromosome"/>
</dbReference>
<dbReference type="GO" id="GO:0005829">
    <property type="term" value="C:cytosol"/>
    <property type="evidence" value="ECO:0007669"/>
    <property type="project" value="TreeGrafter"/>
</dbReference>
<dbReference type="GO" id="GO:0005525">
    <property type="term" value="F:GTP binding"/>
    <property type="evidence" value="ECO:0007669"/>
    <property type="project" value="UniProtKB-UniRule"/>
</dbReference>
<dbReference type="GO" id="GO:0046872">
    <property type="term" value="F:metal ion binding"/>
    <property type="evidence" value="ECO:0007669"/>
    <property type="project" value="UniProtKB-KW"/>
</dbReference>
<dbReference type="GO" id="GO:0000917">
    <property type="term" value="P:division septum assembly"/>
    <property type="evidence" value="ECO:0007669"/>
    <property type="project" value="UniProtKB-KW"/>
</dbReference>
<dbReference type="CDD" id="cd01876">
    <property type="entry name" value="YihA_EngB"/>
    <property type="match status" value="1"/>
</dbReference>
<dbReference type="FunFam" id="3.40.50.300:FF:000098">
    <property type="entry name" value="Probable GTP-binding protein EngB"/>
    <property type="match status" value="1"/>
</dbReference>
<dbReference type="Gene3D" id="3.40.50.300">
    <property type="entry name" value="P-loop containing nucleotide triphosphate hydrolases"/>
    <property type="match status" value="1"/>
</dbReference>
<dbReference type="HAMAP" id="MF_00321">
    <property type="entry name" value="GTPase_EngB"/>
    <property type="match status" value="1"/>
</dbReference>
<dbReference type="InterPro" id="IPR030393">
    <property type="entry name" value="G_ENGB_dom"/>
</dbReference>
<dbReference type="InterPro" id="IPR006073">
    <property type="entry name" value="GTP-bd"/>
</dbReference>
<dbReference type="InterPro" id="IPR019987">
    <property type="entry name" value="GTP-bd_ribosome_bio_YsxC"/>
</dbReference>
<dbReference type="InterPro" id="IPR027417">
    <property type="entry name" value="P-loop_NTPase"/>
</dbReference>
<dbReference type="NCBIfam" id="TIGR03598">
    <property type="entry name" value="GTPase_YsxC"/>
    <property type="match status" value="1"/>
</dbReference>
<dbReference type="PANTHER" id="PTHR11649:SF13">
    <property type="entry name" value="ENGB-TYPE G DOMAIN-CONTAINING PROTEIN"/>
    <property type="match status" value="1"/>
</dbReference>
<dbReference type="PANTHER" id="PTHR11649">
    <property type="entry name" value="MSS1/TRME-RELATED GTP-BINDING PROTEIN"/>
    <property type="match status" value="1"/>
</dbReference>
<dbReference type="Pfam" id="PF01926">
    <property type="entry name" value="MMR_HSR1"/>
    <property type="match status" value="1"/>
</dbReference>
<dbReference type="SUPFAM" id="SSF52540">
    <property type="entry name" value="P-loop containing nucleoside triphosphate hydrolases"/>
    <property type="match status" value="1"/>
</dbReference>
<dbReference type="PROSITE" id="PS51706">
    <property type="entry name" value="G_ENGB"/>
    <property type="match status" value="1"/>
</dbReference>
<protein>
    <recommendedName>
        <fullName evidence="1">Probable GTP-binding protein EngB</fullName>
    </recommendedName>
</protein>
<feature type="chain" id="PRO_0000266892" description="Probable GTP-binding protein EngB">
    <location>
        <begin position="1"/>
        <end position="210"/>
    </location>
</feature>
<feature type="domain" description="EngB-type G" evidence="1">
    <location>
        <begin position="24"/>
        <end position="199"/>
    </location>
</feature>
<feature type="binding site" evidence="1">
    <location>
        <begin position="32"/>
        <end position="39"/>
    </location>
    <ligand>
        <name>GTP</name>
        <dbReference type="ChEBI" id="CHEBI:37565"/>
    </ligand>
</feature>
<feature type="binding site" evidence="1">
    <location>
        <position position="39"/>
    </location>
    <ligand>
        <name>Mg(2+)</name>
        <dbReference type="ChEBI" id="CHEBI:18420"/>
    </ligand>
</feature>
<feature type="binding site" evidence="1">
    <location>
        <begin position="59"/>
        <end position="63"/>
    </location>
    <ligand>
        <name>GTP</name>
        <dbReference type="ChEBI" id="CHEBI:37565"/>
    </ligand>
</feature>
<feature type="binding site" evidence="1">
    <location>
        <position position="61"/>
    </location>
    <ligand>
        <name>Mg(2+)</name>
        <dbReference type="ChEBI" id="CHEBI:18420"/>
    </ligand>
</feature>
<feature type="binding site" evidence="1">
    <location>
        <begin position="77"/>
        <end position="80"/>
    </location>
    <ligand>
        <name>GTP</name>
        <dbReference type="ChEBI" id="CHEBI:37565"/>
    </ligand>
</feature>
<feature type="binding site" evidence="1">
    <location>
        <begin position="144"/>
        <end position="147"/>
    </location>
    <ligand>
        <name>GTP</name>
        <dbReference type="ChEBI" id="CHEBI:37565"/>
    </ligand>
</feature>
<feature type="binding site" evidence="1">
    <location>
        <begin position="178"/>
        <end position="180"/>
    </location>
    <ligand>
        <name>GTP</name>
        <dbReference type="ChEBI" id="CHEBI:37565"/>
    </ligand>
</feature>
<comment type="function">
    <text evidence="1">Necessary for normal cell division and for the maintenance of normal septation.</text>
</comment>
<comment type="cofactor">
    <cofactor evidence="1">
        <name>Mg(2+)</name>
        <dbReference type="ChEBI" id="CHEBI:18420"/>
    </cofactor>
</comment>
<comment type="similarity">
    <text evidence="1">Belongs to the TRAFAC class TrmE-Era-EngA-EngB-Septin-like GTPase superfamily. EngB GTPase family.</text>
</comment>
<organism>
    <name type="scientific">Methylococcus capsulatus (strain ATCC 33009 / NCIMB 11132 / Bath)</name>
    <dbReference type="NCBI Taxonomy" id="243233"/>
    <lineage>
        <taxon>Bacteria</taxon>
        <taxon>Pseudomonadati</taxon>
        <taxon>Pseudomonadota</taxon>
        <taxon>Gammaproteobacteria</taxon>
        <taxon>Methylococcales</taxon>
        <taxon>Methylococcaceae</taxon>
        <taxon>Methylococcus</taxon>
    </lineage>
</organism>